<reference key="1">
    <citation type="journal article" date="2011" name="J. Bacteriol.">
        <title>Genome of Ochrobactrum anthropi ATCC 49188 T, a versatile opportunistic pathogen and symbiont of several eukaryotic hosts.</title>
        <authorList>
            <person name="Chain P.S."/>
            <person name="Lang D.M."/>
            <person name="Comerci D.J."/>
            <person name="Malfatti S.A."/>
            <person name="Vergez L.M."/>
            <person name="Shin M."/>
            <person name="Ugalde R.A."/>
            <person name="Garcia E."/>
            <person name="Tolmasky M.E."/>
        </authorList>
    </citation>
    <scope>NUCLEOTIDE SEQUENCE [LARGE SCALE GENOMIC DNA]</scope>
    <source>
        <strain>ATCC 49188 / DSM 6882 / CCUG 24695 / JCM 21032 / LMG 3331 / NBRC 15819 / NCTC 12168 / Alc 37</strain>
    </source>
</reference>
<feature type="chain" id="PRO_1000050548" description="Ketol-acid reductoisomerase (NADP(+))">
    <location>
        <begin position="1"/>
        <end position="339"/>
    </location>
</feature>
<feature type="domain" description="KARI N-terminal Rossmann" evidence="2">
    <location>
        <begin position="1"/>
        <end position="182"/>
    </location>
</feature>
<feature type="domain" description="KARI C-terminal knotted" evidence="3">
    <location>
        <begin position="183"/>
        <end position="328"/>
    </location>
</feature>
<feature type="active site" evidence="1">
    <location>
        <position position="108"/>
    </location>
</feature>
<feature type="binding site" evidence="1">
    <location>
        <begin position="24"/>
        <end position="27"/>
    </location>
    <ligand>
        <name>NADP(+)</name>
        <dbReference type="ChEBI" id="CHEBI:58349"/>
    </ligand>
</feature>
<feature type="binding site" evidence="1">
    <location>
        <position position="48"/>
    </location>
    <ligand>
        <name>NADP(+)</name>
        <dbReference type="ChEBI" id="CHEBI:58349"/>
    </ligand>
</feature>
<feature type="binding site" evidence="1">
    <location>
        <position position="51"/>
    </location>
    <ligand>
        <name>NADP(+)</name>
        <dbReference type="ChEBI" id="CHEBI:58349"/>
    </ligand>
</feature>
<feature type="binding site" evidence="1">
    <location>
        <position position="53"/>
    </location>
    <ligand>
        <name>NADP(+)</name>
        <dbReference type="ChEBI" id="CHEBI:58349"/>
    </ligand>
</feature>
<feature type="binding site" evidence="1">
    <location>
        <begin position="83"/>
        <end position="86"/>
    </location>
    <ligand>
        <name>NADP(+)</name>
        <dbReference type="ChEBI" id="CHEBI:58349"/>
    </ligand>
</feature>
<feature type="binding site" evidence="1">
    <location>
        <position position="134"/>
    </location>
    <ligand>
        <name>NADP(+)</name>
        <dbReference type="ChEBI" id="CHEBI:58349"/>
    </ligand>
</feature>
<feature type="binding site" evidence="1">
    <location>
        <position position="191"/>
    </location>
    <ligand>
        <name>Mg(2+)</name>
        <dbReference type="ChEBI" id="CHEBI:18420"/>
        <label>1</label>
    </ligand>
</feature>
<feature type="binding site" evidence="1">
    <location>
        <position position="191"/>
    </location>
    <ligand>
        <name>Mg(2+)</name>
        <dbReference type="ChEBI" id="CHEBI:18420"/>
        <label>2</label>
    </ligand>
</feature>
<feature type="binding site" evidence="1">
    <location>
        <position position="195"/>
    </location>
    <ligand>
        <name>Mg(2+)</name>
        <dbReference type="ChEBI" id="CHEBI:18420"/>
        <label>1</label>
    </ligand>
</feature>
<feature type="binding site" evidence="1">
    <location>
        <position position="227"/>
    </location>
    <ligand>
        <name>Mg(2+)</name>
        <dbReference type="ChEBI" id="CHEBI:18420"/>
        <label>2</label>
    </ligand>
</feature>
<feature type="binding site" evidence="1">
    <location>
        <position position="231"/>
    </location>
    <ligand>
        <name>Mg(2+)</name>
        <dbReference type="ChEBI" id="CHEBI:18420"/>
        <label>2</label>
    </ligand>
</feature>
<feature type="binding site" evidence="1">
    <location>
        <position position="252"/>
    </location>
    <ligand>
        <name>substrate</name>
    </ligand>
</feature>
<dbReference type="EC" id="1.1.1.86" evidence="1"/>
<dbReference type="EMBL" id="CP000758">
    <property type="protein sequence ID" value="ABS14529.1"/>
    <property type="molecule type" value="Genomic_DNA"/>
</dbReference>
<dbReference type="RefSeq" id="WP_010659781.1">
    <property type="nucleotide sequence ID" value="NC_009667.1"/>
</dbReference>
<dbReference type="SMR" id="A6WZX5"/>
<dbReference type="STRING" id="439375.Oant_1813"/>
<dbReference type="GeneID" id="61317725"/>
<dbReference type="KEGG" id="oan:Oant_1813"/>
<dbReference type="eggNOG" id="COG0059">
    <property type="taxonomic scope" value="Bacteria"/>
</dbReference>
<dbReference type="HOGENOM" id="CLU_033821_0_1_5"/>
<dbReference type="PhylomeDB" id="A6WZX5"/>
<dbReference type="UniPathway" id="UPA00047">
    <property type="reaction ID" value="UER00056"/>
</dbReference>
<dbReference type="UniPathway" id="UPA00049">
    <property type="reaction ID" value="UER00060"/>
</dbReference>
<dbReference type="Proteomes" id="UP000002301">
    <property type="component" value="Chromosome 1"/>
</dbReference>
<dbReference type="GO" id="GO:0005829">
    <property type="term" value="C:cytosol"/>
    <property type="evidence" value="ECO:0007669"/>
    <property type="project" value="TreeGrafter"/>
</dbReference>
<dbReference type="GO" id="GO:0004455">
    <property type="term" value="F:ketol-acid reductoisomerase activity"/>
    <property type="evidence" value="ECO:0007669"/>
    <property type="project" value="UniProtKB-UniRule"/>
</dbReference>
<dbReference type="GO" id="GO:0000287">
    <property type="term" value="F:magnesium ion binding"/>
    <property type="evidence" value="ECO:0007669"/>
    <property type="project" value="UniProtKB-UniRule"/>
</dbReference>
<dbReference type="GO" id="GO:0050661">
    <property type="term" value="F:NADP binding"/>
    <property type="evidence" value="ECO:0007669"/>
    <property type="project" value="InterPro"/>
</dbReference>
<dbReference type="GO" id="GO:0009097">
    <property type="term" value="P:isoleucine biosynthetic process"/>
    <property type="evidence" value="ECO:0007669"/>
    <property type="project" value="UniProtKB-UniRule"/>
</dbReference>
<dbReference type="GO" id="GO:0009099">
    <property type="term" value="P:L-valine biosynthetic process"/>
    <property type="evidence" value="ECO:0007669"/>
    <property type="project" value="UniProtKB-UniRule"/>
</dbReference>
<dbReference type="FunFam" id="3.40.50.720:FF:000023">
    <property type="entry name" value="Ketol-acid reductoisomerase (NADP(+))"/>
    <property type="match status" value="1"/>
</dbReference>
<dbReference type="Gene3D" id="6.10.240.10">
    <property type="match status" value="1"/>
</dbReference>
<dbReference type="Gene3D" id="3.40.50.720">
    <property type="entry name" value="NAD(P)-binding Rossmann-like Domain"/>
    <property type="match status" value="1"/>
</dbReference>
<dbReference type="HAMAP" id="MF_00435">
    <property type="entry name" value="IlvC"/>
    <property type="match status" value="1"/>
</dbReference>
<dbReference type="InterPro" id="IPR008927">
    <property type="entry name" value="6-PGluconate_DH-like_C_sf"/>
</dbReference>
<dbReference type="InterPro" id="IPR013023">
    <property type="entry name" value="KARI"/>
</dbReference>
<dbReference type="InterPro" id="IPR000506">
    <property type="entry name" value="KARI_C"/>
</dbReference>
<dbReference type="InterPro" id="IPR013116">
    <property type="entry name" value="KARI_N"/>
</dbReference>
<dbReference type="InterPro" id="IPR014359">
    <property type="entry name" value="KARI_prok"/>
</dbReference>
<dbReference type="InterPro" id="IPR036291">
    <property type="entry name" value="NAD(P)-bd_dom_sf"/>
</dbReference>
<dbReference type="NCBIfam" id="TIGR00465">
    <property type="entry name" value="ilvC"/>
    <property type="match status" value="1"/>
</dbReference>
<dbReference type="NCBIfam" id="NF004017">
    <property type="entry name" value="PRK05479.1"/>
    <property type="match status" value="1"/>
</dbReference>
<dbReference type="NCBIfam" id="NF009940">
    <property type="entry name" value="PRK13403.1"/>
    <property type="match status" value="1"/>
</dbReference>
<dbReference type="PANTHER" id="PTHR21371">
    <property type="entry name" value="KETOL-ACID REDUCTOISOMERASE, MITOCHONDRIAL"/>
    <property type="match status" value="1"/>
</dbReference>
<dbReference type="PANTHER" id="PTHR21371:SF1">
    <property type="entry name" value="KETOL-ACID REDUCTOISOMERASE, MITOCHONDRIAL"/>
    <property type="match status" value="1"/>
</dbReference>
<dbReference type="Pfam" id="PF01450">
    <property type="entry name" value="KARI_C"/>
    <property type="match status" value="1"/>
</dbReference>
<dbReference type="Pfam" id="PF07991">
    <property type="entry name" value="KARI_N"/>
    <property type="match status" value="1"/>
</dbReference>
<dbReference type="PIRSF" id="PIRSF000116">
    <property type="entry name" value="IlvC_gammaproteo"/>
    <property type="match status" value="1"/>
</dbReference>
<dbReference type="SUPFAM" id="SSF48179">
    <property type="entry name" value="6-phosphogluconate dehydrogenase C-terminal domain-like"/>
    <property type="match status" value="1"/>
</dbReference>
<dbReference type="SUPFAM" id="SSF51735">
    <property type="entry name" value="NAD(P)-binding Rossmann-fold domains"/>
    <property type="match status" value="1"/>
</dbReference>
<dbReference type="PROSITE" id="PS51851">
    <property type="entry name" value="KARI_C"/>
    <property type="match status" value="1"/>
</dbReference>
<dbReference type="PROSITE" id="PS51850">
    <property type="entry name" value="KARI_N"/>
    <property type="match status" value="1"/>
</dbReference>
<proteinExistence type="inferred from homology"/>
<evidence type="ECO:0000255" key="1">
    <source>
        <dbReference type="HAMAP-Rule" id="MF_00435"/>
    </source>
</evidence>
<evidence type="ECO:0000255" key="2">
    <source>
        <dbReference type="PROSITE-ProRule" id="PRU01197"/>
    </source>
</evidence>
<evidence type="ECO:0000255" key="3">
    <source>
        <dbReference type="PROSITE-ProRule" id="PRU01198"/>
    </source>
</evidence>
<sequence>MRVYYDRDADVNLIKSKKVVIVGYGSQGRAHALNLKDSGAANVRVALREGSATAKKAQADGFEVMNVADAAKWADLMMMATPDELQADIYKEHIHDNLRDGAAIAFAHGLNVHFGLIEPKKSVDVVMIAPKGPGHTVRGEYQKGGGVPCLIAIHQDASGNAHDLALSYASGVGGGRSGVIETTFKEECETDLFGEQAVLCGGVVELIRTGFEVLVEAGYAPEMAYFECLHEMKLIVDLIYEGGIANMNYSISNTAEWGEYVTGPRIITAETKEEMKRVLKDIQTGKFTSDWMQEYRAGAARFKGIRRNNDSHQIEEVGEKLRGMMPWIAANKLVDKARN</sequence>
<comment type="function">
    <text evidence="1">Involved in the biosynthesis of branched-chain amino acids (BCAA). Catalyzes an alkyl-migration followed by a ketol-acid reduction of (S)-2-acetolactate (S2AL) to yield (R)-2,3-dihydroxy-isovalerate. In the isomerase reaction, S2AL is rearranged via a Mg-dependent methyl migration to produce 3-hydroxy-3-methyl-2-ketobutyrate (HMKB). In the reductase reaction, this 2-ketoacid undergoes a metal-dependent reduction by NADPH to yield (R)-2,3-dihydroxy-isovalerate.</text>
</comment>
<comment type="catalytic activity">
    <reaction evidence="1">
        <text>(2R)-2,3-dihydroxy-3-methylbutanoate + NADP(+) = (2S)-2-acetolactate + NADPH + H(+)</text>
        <dbReference type="Rhea" id="RHEA:22068"/>
        <dbReference type="ChEBI" id="CHEBI:15378"/>
        <dbReference type="ChEBI" id="CHEBI:49072"/>
        <dbReference type="ChEBI" id="CHEBI:57783"/>
        <dbReference type="ChEBI" id="CHEBI:58349"/>
        <dbReference type="ChEBI" id="CHEBI:58476"/>
        <dbReference type="EC" id="1.1.1.86"/>
    </reaction>
</comment>
<comment type="catalytic activity">
    <reaction evidence="1">
        <text>(2R,3R)-2,3-dihydroxy-3-methylpentanoate + NADP(+) = (S)-2-ethyl-2-hydroxy-3-oxobutanoate + NADPH + H(+)</text>
        <dbReference type="Rhea" id="RHEA:13493"/>
        <dbReference type="ChEBI" id="CHEBI:15378"/>
        <dbReference type="ChEBI" id="CHEBI:49256"/>
        <dbReference type="ChEBI" id="CHEBI:49258"/>
        <dbReference type="ChEBI" id="CHEBI:57783"/>
        <dbReference type="ChEBI" id="CHEBI:58349"/>
        <dbReference type="EC" id="1.1.1.86"/>
    </reaction>
</comment>
<comment type="cofactor">
    <cofactor evidence="1">
        <name>Mg(2+)</name>
        <dbReference type="ChEBI" id="CHEBI:18420"/>
    </cofactor>
    <text evidence="1">Binds 2 magnesium ions per subunit.</text>
</comment>
<comment type="pathway">
    <text evidence="1">Amino-acid biosynthesis; L-isoleucine biosynthesis; L-isoleucine from 2-oxobutanoate: step 2/4.</text>
</comment>
<comment type="pathway">
    <text evidence="1">Amino-acid biosynthesis; L-valine biosynthesis; L-valine from pyruvate: step 2/4.</text>
</comment>
<comment type="similarity">
    <text evidence="1">Belongs to the ketol-acid reductoisomerase family.</text>
</comment>
<name>ILVC_BRUA4</name>
<protein>
    <recommendedName>
        <fullName evidence="1">Ketol-acid reductoisomerase (NADP(+))</fullName>
        <shortName evidence="1">KARI</shortName>
        <ecNumber evidence="1">1.1.1.86</ecNumber>
    </recommendedName>
    <alternativeName>
        <fullName evidence="1">Acetohydroxy-acid isomeroreductase</fullName>
        <shortName evidence="1">AHIR</shortName>
    </alternativeName>
    <alternativeName>
        <fullName evidence="1">Alpha-keto-beta-hydroxylacyl reductoisomerase</fullName>
    </alternativeName>
    <alternativeName>
        <fullName evidence="1">Ketol-acid reductoisomerase type 1</fullName>
    </alternativeName>
    <alternativeName>
        <fullName evidence="1">Ketol-acid reductoisomerase type I</fullName>
    </alternativeName>
</protein>
<accession>A6WZX5</accession>
<keyword id="KW-0028">Amino-acid biosynthesis</keyword>
<keyword id="KW-0100">Branched-chain amino acid biosynthesis</keyword>
<keyword id="KW-0460">Magnesium</keyword>
<keyword id="KW-0479">Metal-binding</keyword>
<keyword id="KW-0521">NADP</keyword>
<keyword id="KW-0560">Oxidoreductase</keyword>
<keyword id="KW-1185">Reference proteome</keyword>
<organism>
    <name type="scientific">Brucella anthropi (strain ATCC 49188 / DSM 6882 / CCUG 24695 / JCM 21032 / LMG 3331 / NBRC 15819 / NCTC 12168 / Alc 37)</name>
    <name type="common">Ochrobactrum anthropi</name>
    <dbReference type="NCBI Taxonomy" id="439375"/>
    <lineage>
        <taxon>Bacteria</taxon>
        <taxon>Pseudomonadati</taxon>
        <taxon>Pseudomonadota</taxon>
        <taxon>Alphaproteobacteria</taxon>
        <taxon>Hyphomicrobiales</taxon>
        <taxon>Brucellaceae</taxon>
        <taxon>Brucella/Ochrobactrum group</taxon>
        <taxon>Brucella</taxon>
    </lineage>
</organism>
<gene>
    <name evidence="1" type="primary">ilvC</name>
    <name type="ordered locus">Oant_1813</name>
</gene>